<keyword id="KW-1003">Cell membrane</keyword>
<keyword id="KW-0472">Membrane</keyword>
<keyword id="KW-1185">Reference proteome</keyword>
<keyword id="KW-0812">Transmembrane</keyword>
<keyword id="KW-1133">Transmembrane helix</keyword>
<accession>Q5ZSV1</accession>
<sequence length="63" mass="6771">MLYWALIFLIVAIVAGLFGFRGVASAATGIAKVLFFLFIVMFIVLLVFSLLGGTPEPVVIVKP</sequence>
<protein>
    <recommendedName>
        <fullName evidence="1">UPF0391 membrane protein lpg2415</fullName>
    </recommendedName>
</protein>
<comment type="subcellular location">
    <subcellularLocation>
        <location evidence="1">Cell membrane</location>
        <topology evidence="1">Multi-pass membrane protein</topology>
    </subcellularLocation>
</comment>
<comment type="similarity">
    <text evidence="1">Belongs to the UPF0391 family.</text>
</comment>
<proteinExistence type="inferred from homology"/>
<reference key="1">
    <citation type="journal article" date="2004" name="Science">
        <title>The genomic sequence of the accidental pathogen Legionella pneumophila.</title>
        <authorList>
            <person name="Chien M."/>
            <person name="Morozova I."/>
            <person name="Shi S."/>
            <person name="Sheng H."/>
            <person name="Chen J."/>
            <person name="Gomez S.M."/>
            <person name="Asamani G."/>
            <person name="Hill K."/>
            <person name="Nuara J."/>
            <person name="Feder M."/>
            <person name="Rineer J."/>
            <person name="Greenberg J.J."/>
            <person name="Steshenko V."/>
            <person name="Park S.H."/>
            <person name="Zhao B."/>
            <person name="Teplitskaya E."/>
            <person name="Edwards J.R."/>
            <person name="Pampou S."/>
            <person name="Georghiou A."/>
            <person name="Chou I.-C."/>
            <person name="Iannuccilli W."/>
            <person name="Ulz M.E."/>
            <person name="Kim D.H."/>
            <person name="Geringer-Sameth A."/>
            <person name="Goldsberry C."/>
            <person name="Morozov P."/>
            <person name="Fischer S.G."/>
            <person name="Segal G."/>
            <person name="Qu X."/>
            <person name="Rzhetsky A."/>
            <person name="Zhang P."/>
            <person name="Cayanis E."/>
            <person name="De Jong P.J."/>
            <person name="Ju J."/>
            <person name="Kalachikov S."/>
            <person name="Shuman H.A."/>
            <person name="Russo J.J."/>
        </authorList>
    </citation>
    <scope>NUCLEOTIDE SEQUENCE [LARGE SCALE GENOMIC DNA]</scope>
    <source>
        <strain>Philadelphia 1 / ATCC 33152 / DSM 7513</strain>
    </source>
</reference>
<organism>
    <name type="scientific">Legionella pneumophila subsp. pneumophila (strain Philadelphia 1 / ATCC 33152 / DSM 7513)</name>
    <dbReference type="NCBI Taxonomy" id="272624"/>
    <lineage>
        <taxon>Bacteria</taxon>
        <taxon>Pseudomonadati</taxon>
        <taxon>Pseudomonadota</taxon>
        <taxon>Gammaproteobacteria</taxon>
        <taxon>Legionellales</taxon>
        <taxon>Legionellaceae</taxon>
        <taxon>Legionella</taxon>
    </lineage>
</organism>
<name>Y2415_LEGPH</name>
<evidence type="ECO:0000255" key="1">
    <source>
        <dbReference type="HAMAP-Rule" id="MF_01361"/>
    </source>
</evidence>
<gene>
    <name type="ordered locus">lpg2415</name>
</gene>
<feature type="chain" id="PRO_0000256745" description="UPF0391 membrane protein lpg2415">
    <location>
        <begin position="1"/>
        <end position="63"/>
    </location>
</feature>
<feature type="transmembrane region" description="Helical" evidence="1">
    <location>
        <begin position="4"/>
        <end position="24"/>
    </location>
</feature>
<feature type="transmembrane region" description="Helical" evidence="1">
    <location>
        <begin position="33"/>
        <end position="53"/>
    </location>
</feature>
<dbReference type="EMBL" id="AE017354">
    <property type="protein sequence ID" value="AAU28476.1"/>
    <property type="molecule type" value="Genomic_DNA"/>
</dbReference>
<dbReference type="RefSeq" id="WP_010948119.1">
    <property type="nucleotide sequence ID" value="NC_002942.5"/>
</dbReference>
<dbReference type="RefSeq" id="YP_096423.1">
    <property type="nucleotide sequence ID" value="NC_002942.5"/>
</dbReference>
<dbReference type="STRING" id="272624.lpg2415"/>
<dbReference type="PaxDb" id="272624-lpg2415"/>
<dbReference type="KEGG" id="lpn:lpg2415"/>
<dbReference type="PATRIC" id="fig|272624.6.peg.2557"/>
<dbReference type="eggNOG" id="COG5487">
    <property type="taxonomic scope" value="Bacteria"/>
</dbReference>
<dbReference type="HOGENOM" id="CLU_187346_1_0_6"/>
<dbReference type="OrthoDB" id="5461362at2"/>
<dbReference type="Proteomes" id="UP000000609">
    <property type="component" value="Chromosome"/>
</dbReference>
<dbReference type="GO" id="GO:0005886">
    <property type="term" value="C:plasma membrane"/>
    <property type="evidence" value="ECO:0007669"/>
    <property type="project" value="UniProtKB-SubCell"/>
</dbReference>
<dbReference type="HAMAP" id="MF_01361">
    <property type="entry name" value="UPF0391"/>
    <property type="match status" value="1"/>
</dbReference>
<dbReference type="InterPro" id="IPR009760">
    <property type="entry name" value="DUF1328"/>
</dbReference>
<dbReference type="NCBIfam" id="NF010228">
    <property type="entry name" value="PRK13682.1-3"/>
    <property type="match status" value="1"/>
</dbReference>
<dbReference type="NCBIfam" id="NF010229">
    <property type="entry name" value="PRK13682.1-4"/>
    <property type="match status" value="1"/>
</dbReference>
<dbReference type="Pfam" id="PF07043">
    <property type="entry name" value="DUF1328"/>
    <property type="match status" value="1"/>
</dbReference>
<dbReference type="PIRSF" id="PIRSF036466">
    <property type="entry name" value="UCP036466"/>
    <property type="match status" value="1"/>
</dbReference>